<reference key="1">
    <citation type="journal article" date="2004" name="Nat. Genet.">
        <title>Complete sequencing and characterization of 21,243 full-length human cDNAs.</title>
        <authorList>
            <person name="Ota T."/>
            <person name="Suzuki Y."/>
            <person name="Nishikawa T."/>
            <person name="Otsuki T."/>
            <person name="Sugiyama T."/>
            <person name="Irie R."/>
            <person name="Wakamatsu A."/>
            <person name="Hayashi K."/>
            <person name="Sato H."/>
            <person name="Nagai K."/>
            <person name="Kimura K."/>
            <person name="Makita H."/>
            <person name="Sekine M."/>
            <person name="Obayashi M."/>
            <person name="Nishi T."/>
            <person name="Shibahara T."/>
            <person name="Tanaka T."/>
            <person name="Ishii S."/>
            <person name="Yamamoto J."/>
            <person name="Saito K."/>
            <person name="Kawai Y."/>
            <person name="Isono Y."/>
            <person name="Nakamura Y."/>
            <person name="Nagahari K."/>
            <person name="Murakami K."/>
            <person name="Yasuda T."/>
            <person name="Iwayanagi T."/>
            <person name="Wagatsuma M."/>
            <person name="Shiratori A."/>
            <person name="Sudo H."/>
            <person name="Hosoiri T."/>
            <person name="Kaku Y."/>
            <person name="Kodaira H."/>
            <person name="Kondo H."/>
            <person name="Sugawara M."/>
            <person name="Takahashi M."/>
            <person name="Kanda K."/>
            <person name="Yokoi T."/>
            <person name="Furuya T."/>
            <person name="Kikkawa E."/>
            <person name="Omura Y."/>
            <person name="Abe K."/>
            <person name="Kamihara K."/>
            <person name="Katsuta N."/>
            <person name="Sato K."/>
            <person name="Tanikawa M."/>
            <person name="Yamazaki M."/>
            <person name="Ninomiya K."/>
            <person name="Ishibashi T."/>
            <person name="Yamashita H."/>
            <person name="Murakawa K."/>
            <person name="Fujimori K."/>
            <person name="Tanai H."/>
            <person name="Kimata M."/>
            <person name="Watanabe M."/>
            <person name="Hiraoka S."/>
            <person name="Chiba Y."/>
            <person name="Ishida S."/>
            <person name="Ono Y."/>
            <person name="Takiguchi S."/>
            <person name="Watanabe S."/>
            <person name="Yosida M."/>
            <person name="Hotuta T."/>
            <person name="Kusano J."/>
            <person name="Kanehori K."/>
            <person name="Takahashi-Fujii A."/>
            <person name="Hara H."/>
            <person name="Tanase T.-O."/>
            <person name="Nomura Y."/>
            <person name="Togiya S."/>
            <person name="Komai F."/>
            <person name="Hara R."/>
            <person name="Takeuchi K."/>
            <person name="Arita M."/>
            <person name="Imose N."/>
            <person name="Musashino K."/>
            <person name="Yuuki H."/>
            <person name="Oshima A."/>
            <person name="Sasaki N."/>
            <person name="Aotsuka S."/>
            <person name="Yoshikawa Y."/>
            <person name="Matsunawa H."/>
            <person name="Ichihara T."/>
            <person name="Shiohata N."/>
            <person name="Sano S."/>
            <person name="Moriya S."/>
            <person name="Momiyama H."/>
            <person name="Satoh N."/>
            <person name="Takami S."/>
            <person name="Terashima Y."/>
            <person name="Suzuki O."/>
            <person name="Nakagawa S."/>
            <person name="Senoh A."/>
            <person name="Mizoguchi H."/>
            <person name="Goto Y."/>
            <person name="Shimizu F."/>
            <person name="Wakebe H."/>
            <person name="Hishigaki H."/>
            <person name="Watanabe T."/>
            <person name="Sugiyama A."/>
            <person name="Takemoto M."/>
            <person name="Kawakami B."/>
            <person name="Yamazaki M."/>
            <person name="Watanabe K."/>
            <person name="Kumagai A."/>
            <person name="Itakura S."/>
            <person name="Fukuzumi Y."/>
            <person name="Fujimori Y."/>
            <person name="Komiyama M."/>
            <person name="Tashiro H."/>
            <person name="Tanigami A."/>
            <person name="Fujiwara T."/>
            <person name="Ono T."/>
            <person name="Yamada K."/>
            <person name="Fujii Y."/>
            <person name="Ozaki K."/>
            <person name="Hirao M."/>
            <person name="Ohmori Y."/>
            <person name="Kawabata A."/>
            <person name="Hikiji T."/>
            <person name="Kobatake N."/>
            <person name="Inagaki H."/>
            <person name="Ikema Y."/>
            <person name="Okamoto S."/>
            <person name="Okitani R."/>
            <person name="Kawakami T."/>
            <person name="Noguchi S."/>
            <person name="Itoh T."/>
            <person name="Shigeta K."/>
            <person name="Senba T."/>
            <person name="Matsumura K."/>
            <person name="Nakajima Y."/>
            <person name="Mizuno T."/>
            <person name="Morinaga M."/>
            <person name="Sasaki M."/>
            <person name="Togashi T."/>
            <person name="Oyama M."/>
            <person name="Hata H."/>
            <person name="Watanabe M."/>
            <person name="Komatsu T."/>
            <person name="Mizushima-Sugano J."/>
            <person name="Satoh T."/>
            <person name="Shirai Y."/>
            <person name="Takahashi Y."/>
            <person name="Nakagawa K."/>
            <person name="Okumura K."/>
            <person name="Nagase T."/>
            <person name="Nomura N."/>
            <person name="Kikuchi H."/>
            <person name="Masuho Y."/>
            <person name="Yamashita R."/>
            <person name="Nakai K."/>
            <person name="Yada T."/>
            <person name="Nakamura Y."/>
            <person name="Ohara O."/>
            <person name="Isogai T."/>
            <person name="Sugano S."/>
        </authorList>
    </citation>
    <scope>NUCLEOTIDE SEQUENCE [LARGE SCALE MRNA]</scope>
    <scope>VARIANT GLU-101</scope>
    <source>
        <tissue>Amygdala</tissue>
    </source>
</reference>
<reference key="2">
    <citation type="journal article" date="2005" name="Nature">
        <title>Generation and annotation of the DNA sequences of human chromosomes 2 and 4.</title>
        <authorList>
            <person name="Hillier L.W."/>
            <person name="Graves T.A."/>
            <person name="Fulton R.S."/>
            <person name="Fulton L.A."/>
            <person name="Pepin K.H."/>
            <person name="Minx P."/>
            <person name="Wagner-McPherson C."/>
            <person name="Layman D."/>
            <person name="Wylie K."/>
            <person name="Sekhon M."/>
            <person name="Becker M.C."/>
            <person name="Fewell G.A."/>
            <person name="Delehaunty K.D."/>
            <person name="Miner T.L."/>
            <person name="Nash W.E."/>
            <person name="Kremitzki C."/>
            <person name="Oddy L."/>
            <person name="Du H."/>
            <person name="Sun H."/>
            <person name="Bradshaw-Cordum H."/>
            <person name="Ali J."/>
            <person name="Carter J."/>
            <person name="Cordes M."/>
            <person name="Harris A."/>
            <person name="Isak A."/>
            <person name="van Brunt A."/>
            <person name="Nguyen C."/>
            <person name="Du F."/>
            <person name="Courtney L."/>
            <person name="Kalicki J."/>
            <person name="Ozersky P."/>
            <person name="Abbott S."/>
            <person name="Armstrong J."/>
            <person name="Belter E.A."/>
            <person name="Caruso L."/>
            <person name="Cedroni M."/>
            <person name="Cotton M."/>
            <person name="Davidson T."/>
            <person name="Desai A."/>
            <person name="Elliott G."/>
            <person name="Erb T."/>
            <person name="Fronick C."/>
            <person name="Gaige T."/>
            <person name="Haakenson W."/>
            <person name="Haglund K."/>
            <person name="Holmes A."/>
            <person name="Harkins R."/>
            <person name="Kim K."/>
            <person name="Kruchowski S.S."/>
            <person name="Strong C.M."/>
            <person name="Grewal N."/>
            <person name="Goyea E."/>
            <person name="Hou S."/>
            <person name="Levy A."/>
            <person name="Martinka S."/>
            <person name="Mead K."/>
            <person name="McLellan M.D."/>
            <person name="Meyer R."/>
            <person name="Randall-Maher J."/>
            <person name="Tomlinson C."/>
            <person name="Dauphin-Kohlberg S."/>
            <person name="Kozlowicz-Reilly A."/>
            <person name="Shah N."/>
            <person name="Swearengen-Shahid S."/>
            <person name="Snider J."/>
            <person name="Strong J.T."/>
            <person name="Thompson J."/>
            <person name="Yoakum M."/>
            <person name="Leonard S."/>
            <person name="Pearman C."/>
            <person name="Trani L."/>
            <person name="Radionenko M."/>
            <person name="Waligorski J.E."/>
            <person name="Wang C."/>
            <person name="Rock S.M."/>
            <person name="Tin-Wollam A.-M."/>
            <person name="Maupin R."/>
            <person name="Latreille P."/>
            <person name="Wendl M.C."/>
            <person name="Yang S.-P."/>
            <person name="Pohl C."/>
            <person name="Wallis J.W."/>
            <person name="Spieth J."/>
            <person name="Bieri T.A."/>
            <person name="Berkowicz N."/>
            <person name="Nelson J.O."/>
            <person name="Osborne J."/>
            <person name="Ding L."/>
            <person name="Meyer R."/>
            <person name="Sabo A."/>
            <person name="Shotland Y."/>
            <person name="Sinha P."/>
            <person name="Wohldmann P.E."/>
            <person name="Cook L.L."/>
            <person name="Hickenbotham M.T."/>
            <person name="Eldred J."/>
            <person name="Williams D."/>
            <person name="Jones T.A."/>
            <person name="She X."/>
            <person name="Ciccarelli F.D."/>
            <person name="Izaurralde E."/>
            <person name="Taylor J."/>
            <person name="Schmutz J."/>
            <person name="Myers R.M."/>
            <person name="Cox D.R."/>
            <person name="Huang X."/>
            <person name="McPherson J.D."/>
            <person name="Mardis E.R."/>
            <person name="Clifton S.W."/>
            <person name="Warren W.C."/>
            <person name="Chinwalla A.T."/>
            <person name="Eddy S.R."/>
            <person name="Marra M.A."/>
            <person name="Ovcharenko I."/>
            <person name="Furey T.S."/>
            <person name="Miller W."/>
            <person name="Eichler E.E."/>
            <person name="Bork P."/>
            <person name="Suyama M."/>
            <person name="Torrents D."/>
            <person name="Waterston R.H."/>
            <person name="Wilson R.K."/>
        </authorList>
    </citation>
    <scope>NUCLEOTIDE SEQUENCE [LARGE SCALE GENOMIC DNA]</scope>
</reference>
<reference key="3">
    <citation type="submission" date="2005-07" db="EMBL/GenBank/DDBJ databases">
        <authorList>
            <person name="Mural R.J."/>
            <person name="Istrail S."/>
            <person name="Sutton G.G."/>
            <person name="Florea L."/>
            <person name="Halpern A.L."/>
            <person name="Mobarry C.M."/>
            <person name="Lippert R."/>
            <person name="Walenz B."/>
            <person name="Shatkay H."/>
            <person name="Dew I."/>
            <person name="Miller J.R."/>
            <person name="Flanigan M.J."/>
            <person name="Edwards N.J."/>
            <person name="Bolanos R."/>
            <person name="Fasulo D."/>
            <person name="Halldorsson B.V."/>
            <person name="Hannenhalli S."/>
            <person name="Turner R."/>
            <person name="Yooseph S."/>
            <person name="Lu F."/>
            <person name="Nusskern D.R."/>
            <person name="Shue B.C."/>
            <person name="Zheng X.H."/>
            <person name="Zhong F."/>
            <person name="Delcher A.L."/>
            <person name="Huson D.H."/>
            <person name="Kravitz S.A."/>
            <person name="Mouchard L."/>
            <person name="Reinert K."/>
            <person name="Remington K.A."/>
            <person name="Clark A.G."/>
            <person name="Waterman M.S."/>
            <person name="Eichler E.E."/>
            <person name="Adams M.D."/>
            <person name="Hunkapiller M.W."/>
            <person name="Myers E.W."/>
            <person name="Venter J.C."/>
        </authorList>
    </citation>
    <scope>NUCLEOTIDE SEQUENCE [LARGE SCALE GENOMIC DNA]</scope>
    <scope>VARIANT GLU-101</scope>
</reference>
<reference key="4">
    <citation type="journal article" date="2004" name="Genome Res.">
        <title>The status, quality, and expansion of the NIH full-length cDNA project: the Mammalian Gene Collection (MGC).</title>
        <authorList>
            <consortium name="The MGC Project Team"/>
        </authorList>
    </citation>
    <scope>NUCLEOTIDE SEQUENCE [LARGE SCALE MRNA]</scope>
    <scope>VARIANT GLU-101</scope>
    <source>
        <tissue>Brain</tissue>
    </source>
</reference>
<reference key="5">
    <citation type="journal article" date="2012" name="N. Engl. J. Med.">
        <title>Diagnostic exome sequencing in persons with severe intellectual disability.</title>
        <authorList>
            <person name="de Ligt J."/>
            <person name="Willemsen M.H."/>
            <person name="van Bon B.W."/>
            <person name="Kleefstra T."/>
            <person name="Yntema H.G."/>
            <person name="Kroes T."/>
            <person name="Vulto-van Silfhout A.T."/>
            <person name="Koolen D.A."/>
            <person name="de Vries P."/>
            <person name="Gilissen C."/>
            <person name="del Rosario M."/>
            <person name="Hoischen A."/>
            <person name="Scheffer H."/>
            <person name="de Vries B.B."/>
            <person name="Brunner H.G."/>
            <person name="Veltman J.A."/>
            <person name="Vissers L.E."/>
        </authorList>
    </citation>
    <scope>VARIANT ASP-412</scope>
</reference>
<evidence type="ECO:0000255" key="1"/>
<evidence type="ECO:0000269" key="2">
    <source>
    </source>
</evidence>
<evidence type="ECO:0000269" key="3">
    <source>
    </source>
</evidence>
<evidence type="ECO:0000269" key="4">
    <source>
    </source>
</evidence>
<evidence type="ECO:0000269" key="5">
    <source ref="3"/>
</evidence>
<evidence type="ECO:0000305" key="6"/>
<name>RTP5_HUMAN</name>
<sequence length="572" mass="60488">MDRAGADMWASTFTLAMAERKPQDVWVLLPEHSLVPGCLDGGGVQYLLVGLSRLQCGHCPGTWDSAHVHVLFHLWWDRASHRGLVKMRIWGQRCRLCPAPGDCQVRPPGEQPFLSRLVLHILQDCYGDGPGPARHPREAYEGCCEACELGVCFLQKAPDPAWSANATKGNFPATAWGGTGTVSRGKPLSTPGDDLGKGGVVIAIPFSLVGTSNDQVPIAEGPAPPAGASLPVTGSCEALVIGQGSIFLSGDSVAMPGGKGFPVAIGDPLFHGPGLLGSSIQTFELKGFLFKGRGSLCSPVGVAQGWGPISLNNGLVPVGKHTPTVFYCVGLSASGEGSLTFPSSLTSIFTNTLSEPTDGPVATKEASITFPFIFTDVKDAVAEVAEGNGKEGGGQGLVPVGHDALPETNAGGLPSQVKGSLALPFPADVQGKDAFTDITEGKEKEGGLVTAGHDAPLEANAEGPITVSEGCITIPFAVFDVIKRKGGGHVAYGPQGNGCFSQGYYQKRQLRSRFHKARCGCRREEDERPGRACRRPHAEPYEDFWIWVSMTVCVFWLMCMCRLNPGIYPQQV</sequence>
<accession>Q14D33</accession>
<accession>Q8N2A5</accession>
<proteinExistence type="evidence at protein level"/>
<organism>
    <name type="scientific">Homo sapiens</name>
    <name type="common">Human</name>
    <dbReference type="NCBI Taxonomy" id="9606"/>
    <lineage>
        <taxon>Eukaryota</taxon>
        <taxon>Metazoa</taxon>
        <taxon>Chordata</taxon>
        <taxon>Craniata</taxon>
        <taxon>Vertebrata</taxon>
        <taxon>Euteleostomi</taxon>
        <taxon>Mammalia</taxon>
        <taxon>Eutheria</taxon>
        <taxon>Euarchontoglires</taxon>
        <taxon>Primates</taxon>
        <taxon>Haplorrhini</taxon>
        <taxon>Catarrhini</taxon>
        <taxon>Hominidae</taxon>
        <taxon>Homo</taxon>
    </lineage>
</organism>
<dbReference type="EMBL" id="AK090909">
    <property type="protein sequence ID" value="BAC03544.1"/>
    <property type="molecule type" value="mRNA"/>
</dbReference>
<dbReference type="EMBL" id="AC131097">
    <property type="status" value="NOT_ANNOTATED_CDS"/>
    <property type="molecule type" value="Genomic_DNA"/>
</dbReference>
<dbReference type="EMBL" id="CH471063">
    <property type="protein sequence ID" value="EAW71299.1"/>
    <property type="molecule type" value="Genomic_DNA"/>
</dbReference>
<dbReference type="EMBL" id="BC113517">
    <property type="protein sequence ID" value="AAI13518.1"/>
    <property type="molecule type" value="mRNA"/>
</dbReference>
<dbReference type="EMBL" id="BC113519">
    <property type="protein sequence ID" value="AAI13520.1"/>
    <property type="molecule type" value="mRNA"/>
</dbReference>
<dbReference type="CCDS" id="CCDS42843.1"/>
<dbReference type="RefSeq" id="NP_776182.2">
    <property type="nucleotide sequence ID" value="NM_173821.3"/>
</dbReference>
<dbReference type="BioGRID" id="130013">
    <property type="interactions" value="52"/>
</dbReference>
<dbReference type="FunCoup" id="Q14D33">
    <property type="interactions" value="12"/>
</dbReference>
<dbReference type="IntAct" id="Q14D33">
    <property type="interactions" value="53"/>
</dbReference>
<dbReference type="MINT" id="Q14D33"/>
<dbReference type="STRING" id="9606.ENSP00000345374"/>
<dbReference type="GlyGen" id="Q14D33">
    <property type="glycosylation" value="2 sites, 1 O-linked glycan (1 site)"/>
</dbReference>
<dbReference type="iPTMnet" id="Q14D33"/>
<dbReference type="PhosphoSitePlus" id="Q14D33"/>
<dbReference type="BioMuta" id="RTP5"/>
<dbReference type="DMDM" id="281371551"/>
<dbReference type="PaxDb" id="9606-ENSP00000345374"/>
<dbReference type="PeptideAtlas" id="Q14D33"/>
<dbReference type="Antibodypedia" id="64441">
    <property type="antibodies" value="15 antibodies from 7 providers"/>
</dbReference>
<dbReference type="DNASU" id="285093"/>
<dbReference type="Ensembl" id="ENST00000343216.3">
    <property type="protein sequence ID" value="ENSP00000345374.3"/>
    <property type="gene ID" value="ENSG00000188011.5"/>
</dbReference>
<dbReference type="Ensembl" id="ENST00000617264.2">
    <property type="protein sequence ID" value="ENSP00000482049.1"/>
    <property type="gene ID" value="ENSG00000277949.2"/>
</dbReference>
<dbReference type="GeneID" id="285093"/>
<dbReference type="KEGG" id="hsa:285093"/>
<dbReference type="MANE-Select" id="ENST00000343216.3">
    <property type="protein sequence ID" value="ENSP00000345374.3"/>
    <property type="RefSeq nucleotide sequence ID" value="NM_173821.3"/>
    <property type="RefSeq protein sequence ID" value="NP_776182.2"/>
</dbReference>
<dbReference type="UCSC" id="uc010fzu.2">
    <property type="organism name" value="human"/>
</dbReference>
<dbReference type="AGR" id="HGNC:26585"/>
<dbReference type="CTD" id="285093"/>
<dbReference type="GeneCards" id="RTP5"/>
<dbReference type="HGNC" id="HGNC:26585">
    <property type="gene designation" value="RTP5"/>
</dbReference>
<dbReference type="HPA" id="ENSG00000188011">
    <property type="expression patterns" value="Tissue enriched (brain)"/>
</dbReference>
<dbReference type="neXtProt" id="NX_Q14D33"/>
<dbReference type="OpenTargets" id="ENSG00000188011"/>
<dbReference type="PharmGKB" id="PA164717177"/>
<dbReference type="VEuPathDB" id="HostDB:ENSG00000188011"/>
<dbReference type="eggNOG" id="ENOG502QY6R">
    <property type="taxonomic scope" value="Eukaryota"/>
</dbReference>
<dbReference type="GeneTree" id="ENSGT00940000163732"/>
<dbReference type="HOGENOM" id="CLU_043280_0_0_1"/>
<dbReference type="InParanoid" id="Q14D33"/>
<dbReference type="OMA" id="GRCQWGW"/>
<dbReference type="OrthoDB" id="9479654at2759"/>
<dbReference type="PAN-GO" id="Q14D33">
    <property type="GO annotations" value="4 GO annotations based on evolutionary models"/>
</dbReference>
<dbReference type="PhylomeDB" id="Q14D33"/>
<dbReference type="TreeFam" id="TF333246"/>
<dbReference type="PathwayCommons" id="Q14D33"/>
<dbReference type="SignaLink" id="Q14D33"/>
<dbReference type="BioGRID-ORCS" id="285093">
    <property type="hits" value="8 hits in 1093 CRISPR screens"/>
</dbReference>
<dbReference type="GenomeRNAi" id="285093"/>
<dbReference type="Pharos" id="Q14D33">
    <property type="development level" value="Tdark"/>
</dbReference>
<dbReference type="PRO" id="PR:Q14D33"/>
<dbReference type="Proteomes" id="UP000005640">
    <property type="component" value="Chromosome 2"/>
</dbReference>
<dbReference type="RNAct" id="Q14D33">
    <property type="molecule type" value="protein"/>
</dbReference>
<dbReference type="Bgee" id="ENSG00000188011">
    <property type="expression patterns" value="Expressed in male germ line stem cell (sensu Vertebrata) in testis and 76 other cell types or tissues"/>
</dbReference>
<dbReference type="ExpressionAtlas" id="Q14D33">
    <property type="expression patterns" value="baseline and differential"/>
</dbReference>
<dbReference type="GO" id="GO:0016020">
    <property type="term" value="C:membrane"/>
    <property type="evidence" value="ECO:0007669"/>
    <property type="project" value="UniProtKB-SubCell"/>
</dbReference>
<dbReference type="GO" id="GO:0031849">
    <property type="term" value="F:olfactory receptor binding"/>
    <property type="evidence" value="ECO:0000318"/>
    <property type="project" value="GO_Central"/>
</dbReference>
<dbReference type="GO" id="GO:0008270">
    <property type="term" value="F:zinc ion binding"/>
    <property type="evidence" value="ECO:0007669"/>
    <property type="project" value="UniProtKB-KW"/>
</dbReference>
<dbReference type="GO" id="GO:0001580">
    <property type="term" value="P:detection of chemical stimulus involved in sensory perception of bitter taste"/>
    <property type="evidence" value="ECO:0000318"/>
    <property type="project" value="GO_Central"/>
</dbReference>
<dbReference type="GO" id="GO:0051205">
    <property type="term" value="P:protein insertion into membrane"/>
    <property type="evidence" value="ECO:0000318"/>
    <property type="project" value="GO_Central"/>
</dbReference>
<dbReference type="GO" id="GO:0006612">
    <property type="term" value="P:protein targeting to membrane"/>
    <property type="evidence" value="ECO:0000318"/>
    <property type="project" value="GO_Central"/>
</dbReference>
<dbReference type="InterPro" id="IPR026096">
    <property type="entry name" value="R-trans_p"/>
</dbReference>
<dbReference type="InterPro" id="IPR027377">
    <property type="entry name" value="ZAR1/RTP1-5-like_Znf-3CxxC"/>
</dbReference>
<dbReference type="PANTHER" id="PTHR14402">
    <property type="entry name" value="RECEPTOR TRANSPORTING PROTEIN"/>
    <property type="match status" value="1"/>
</dbReference>
<dbReference type="PANTHER" id="PTHR14402:SF2">
    <property type="entry name" value="RECEPTOR-TRANSPORTING PROTEIN 5"/>
    <property type="match status" value="1"/>
</dbReference>
<dbReference type="Pfam" id="PF13695">
    <property type="entry name" value="Zn_ribbon_3CxxC"/>
    <property type="match status" value="1"/>
</dbReference>
<dbReference type="SMART" id="SM01328">
    <property type="entry name" value="zf-3CxxC"/>
    <property type="match status" value="1"/>
</dbReference>
<comment type="interaction">
    <interactant intactId="EBI-10217913">
        <id>Q14D33</id>
    </interactant>
    <interactant intactId="EBI-77797">
        <id>P35609</id>
        <label>ACTN2</label>
    </interactant>
    <organismsDiffer>false</organismsDiffer>
    <experiments>7</experiments>
</comment>
<comment type="interaction">
    <interactant intactId="EBI-10217913">
        <id>Q14D33</id>
    </interactant>
    <interactant intactId="EBI-2880652">
        <id>Q08043</id>
        <label>ACTN3</label>
    </interactant>
    <organismsDiffer>false</organismsDiffer>
    <experiments>3</experiments>
</comment>
<comment type="interaction">
    <interactant intactId="EBI-10217913">
        <id>Q14D33</id>
    </interactant>
    <interactant intactId="EBI-357530">
        <id>Q9ULX6</id>
        <label>AKAP8L</label>
    </interactant>
    <organismsDiffer>false</organismsDiffer>
    <experiments>3</experiments>
</comment>
<comment type="interaction">
    <interactant intactId="EBI-10217913">
        <id>Q14D33</id>
    </interactant>
    <interactant intactId="EBI-1220105">
        <id>P02654</id>
        <label>APOC1</label>
    </interactant>
    <organismsDiffer>false</organismsDiffer>
    <experiments>3</experiments>
</comment>
<comment type="interaction">
    <interactant intactId="EBI-10217913">
        <id>Q14D33</id>
    </interactant>
    <interactant intactId="EBI-19946665">
        <id>Q86U10</id>
        <label>ASPG</label>
    </interactant>
    <organismsDiffer>false</organismsDiffer>
    <experiments>3</experiments>
</comment>
<comment type="interaction">
    <interactant intactId="EBI-10217913">
        <id>Q14D33</id>
    </interactant>
    <interactant intactId="EBI-724373">
        <id>Q7L4P6</id>
        <label>BEND5</label>
    </interactant>
    <organismsDiffer>false</organismsDiffer>
    <experiments>3</experiments>
</comment>
<comment type="interaction">
    <interactant intactId="EBI-10217913">
        <id>Q14D33</id>
    </interactant>
    <interactant intactId="EBI-953896">
        <id>Q9NP55</id>
        <label>BPIFA1</label>
    </interactant>
    <organismsDiffer>false</organismsDiffer>
    <experiments>3</experiments>
</comment>
<comment type="interaction">
    <interactant intactId="EBI-10217913">
        <id>Q14D33</id>
    </interactant>
    <interactant intactId="EBI-739580">
        <id>Q13137</id>
        <label>CALCOCO2</label>
    </interactant>
    <organismsDiffer>false</organismsDiffer>
    <experiments>6</experiments>
</comment>
<comment type="interaction">
    <interactant intactId="EBI-10217913">
        <id>Q14D33</id>
    </interactant>
    <interactant intactId="EBI-751319">
        <id>Q9H257</id>
        <label>CARD9</label>
    </interactant>
    <organismsDiffer>false</organismsDiffer>
    <experiments>3</experiments>
</comment>
<comment type="interaction">
    <interactant intactId="EBI-10217913">
        <id>Q14D33</id>
    </interactant>
    <interactant intactId="EBI-741724">
        <id>Q8NA61</id>
        <label>CBY2</label>
    </interactant>
    <organismsDiffer>false</organismsDiffer>
    <experiments>3</experiments>
</comment>
<comment type="interaction">
    <interactant intactId="EBI-10217913">
        <id>Q14D33</id>
    </interactant>
    <interactant intactId="EBI-7062247">
        <id>Q9UHD4</id>
        <label>CIDEB</label>
    </interactant>
    <organismsDiffer>false</organismsDiffer>
    <experiments>3</experiments>
</comment>
<comment type="interaction">
    <interactant intactId="EBI-10217913">
        <id>Q14D33</id>
    </interactant>
    <interactant intactId="EBI-3866319">
        <id>Q9Y2V7</id>
        <label>COG6</label>
    </interactant>
    <organismsDiffer>false</organismsDiffer>
    <experiments>3</experiments>
</comment>
<comment type="interaction">
    <interactant intactId="EBI-10217913">
        <id>Q14D33</id>
    </interactant>
    <interactant intactId="EBI-10174653">
        <id>Q8NF50-2</id>
        <label>DOCK8</label>
    </interactant>
    <organismsDiffer>false</organismsDiffer>
    <experiments>3</experiments>
</comment>
<comment type="interaction">
    <interactant intactId="EBI-10217913">
        <id>Q14D33</id>
    </interactant>
    <interactant intactId="EBI-711990">
        <id>O00303</id>
        <label>EIF3F</label>
    </interactant>
    <organismsDiffer>false</organismsDiffer>
    <experiments>3</experiments>
</comment>
<comment type="interaction">
    <interactant intactId="EBI-10217913">
        <id>Q14D33</id>
    </interactant>
    <interactant intactId="EBI-12836320">
        <id>Q92915-2</id>
        <label>FGF14</label>
    </interactant>
    <organismsDiffer>false</organismsDiffer>
    <experiments>3</experiments>
</comment>
<comment type="interaction">
    <interactant intactId="EBI-10217913">
        <id>Q14D33</id>
    </interactant>
    <interactant intactId="EBI-618309">
        <id>Q08379</id>
        <label>GOLGA2</label>
    </interactant>
    <organismsDiffer>false</organismsDiffer>
    <experiments>3</experiments>
</comment>
<comment type="interaction">
    <interactant intactId="EBI-10217913">
        <id>Q14D33</id>
    </interactant>
    <interactant intactId="EBI-5916454">
        <id>A6NEM1</id>
        <label>GOLGA6L9</label>
    </interactant>
    <organismsDiffer>false</organismsDiffer>
    <experiments>3</experiments>
</comment>
<comment type="interaction">
    <interactant intactId="EBI-10217913">
        <id>Q14D33</id>
    </interactant>
    <interactant intactId="EBI-304185">
        <id>P61978</id>
        <label>HNRNPK</label>
    </interactant>
    <organismsDiffer>false</organismsDiffer>
    <experiments>3</experiments>
</comment>
<comment type="interaction">
    <interactant intactId="EBI-10217913">
        <id>Q14D33</id>
    </interactant>
    <interactant intactId="EBI-7060731">
        <id>P61978-2</id>
        <label>HNRNPK</label>
    </interactant>
    <organismsDiffer>false</organismsDiffer>
    <experiments>5</experiments>
</comment>
<comment type="interaction">
    <interactant intactId="EBI-10217913">
        <id>Q14D33</id>
    </interactant>
    <interactant intactId="EBI-7116203">
        <id>O75031</id>
        <label>HSF2BP</label>
    </interactant>
    <organismsDiffer>false</organismsDiffer>
    <experiments>3</experiments>
</comment>
<comment type="interaction">
    <interactant intactId="EBI-10217913">
        <id>Q14D33</id>
    </interactant>
    <interactant intactId="EBI-954040">
        <id>Q92845</id>
        <label>KIFAP3</label>
    </interactant>
    <organismsDiffer>false</organismsDiffer>
    <experiments>3</experiments>
</comment>
<comment type="interaction">
    <interactant intactId="EBI-10217913">
        <id>Q14D33</id>
    </interactant>
    <interactant intactId="EBI-3044087">
        <id>Q7Z3Y8</id>
        <label>KRT27</label>
    </interactant>
    <organismsDiffer>false</organismsDiffer>
    <experiments>3</experiments>
</comment>
<comment type="interaction">
    <interactant intactId="EBI-10217913">
        <id>Q14D33</id>
    </interactant>
    <interactant intactId="EBI-948001">
        <id>Q15323</id>
        <label>KRT31</label>
    </interactant>
    <organismsDiffer>false</organismsDiffer>
    <experiments>3</experiments>
</comment>
<comment type="interaction">
    <interactant intactId="EBI-10217913">
        <id>Q14D33</id>
    </interactant>
    <interactant intactId="EBI-1049638">
        <id>Q14525</id>
        <label>KRT33B</label>
    </interactant>
    <organismsDiffer>false</organismsDiffer>
    <experiments>3</experiments>
</comment>
<comment type="interaction">
    <interactant intactId="EBI-10217913">
        <id>Q14D33</id>
    </interactant>
    <interactant intactId="EBI-1047093">
        <id>O76011</id>
        <label>KRT34</label>
    </interactant>
    <organismsDiffer>false</organismsDiffer>
    <experiments>3</experiments>
</comment>
<comment type="interaction">
    <interactant intactId="EBI-10217913">
        <id>Q14D33</id>
    </interactant>
    <interactant intactId="EBI-10171697">
        <id>Q6A162</id>
        <label>KRT40</label>
    </interactant>
    <organismsDiffer>false</organismsDiffer>
    <experiments>3</experiments>
</comment>
<comment type="interaction">
    <interactant intactId="EBI-10217913">
        <id>Q14D33</id>
    </interactant>
    <interactant intactId="EBI-9996498">
        <id>O43790</id>
        <label>KRT86</label>
    </interactant>
    <organismsDiffer>false</organismsDiffer>
    <experiments>3</experiments>
</comment>
<comment type="interaction">
    <interactant intactId="EBI-10217913">
        <id>Q14D33</id>
    </interactant>
    <interactant intactId="EBI-1048945">
        <id>Q3LI72</id>
        <label>KRTAP19-5</label>
    </interactant>
    <organismsDiffer>false</organismsDiffer>
    <experiments>3</experiments>
</comment>
<comment type="interaction">
    <interactant intactId="EBI-10217913">
        <id>Q14D33</id>
    </interactant>
    <interactant intactId="EBI-11962084">
        <id>Q3LI66</id>
        <label>KRTAP6-2</label>
    </interactant>
    <organismsDiffer>false</organismsDiffer>
    <experiments>3</experiments>
</comment>
<comment type="interaction">
    <interactant intactId="EBI-10217913">
        <id>Q14D33</id>
    </interactant>
    <interactant intactId="EBI-741037">
        <id>Q9BRK4</id>
        <label>LZTS2</label>
    </interactant>
    <organismsDiffer>false</organismsDiffer>
    <experiments>3</experiments>
</comment>
<comment type="interaction">
    <interactant intactId="EBI-10217913">
        <id>Q14D33</id>
    </interactant>
    <interactant intactId="EBI-724076">
        <id>Q99750</id>
        <label>MDFI</label>
    </interactant>
    <organismsDiffer>false</organismsDiffer>
    <experiments>6</experiments>
</comment>
<comment type="interaction">
    <interactant intactId="EBI-10217913">
        <id>Q14D33</id>
    </interactant>
    <interactant intactId="EBI-2548751">
        <id>Q8TD10</id>
        <label>MIPOL1</label>
    </interactant>
    <organismsDiffer>false</organismsDiffer>
    <experiments>3</experiments>
</comment>
<comment type="interaction">
    <interactant intactId="EBI-10217913">
        <id>Q14D33</id>
    </interactant>
    <interactant intactId="EBI-1104552">
        <id>Q9NYP9</id>
        <label>MIS18A</label>
    </interactant>
    <organismsDiffer>false</organismsDiffer>
    <experiments>3</experiments>
</comment>
<comment type="interaction">
    <interactant intactId="EBI-10217913">
        <id>Q14D33</id>
    </interactant>
    <interactant intactId="EBI-2340269">
        <id>Q13064</id>
        <label>MKRN3</label>
    </interactant>
    <organismsDiffer>false</organismsDiffer>
    <experiments>5</experiments>
</comment>
<comment type="interaction">
    <interactant intactId="EBI-10217913">
        <id>Q14D33</id>
    </interactant>
    <interactant intactId="EBI-742948">
        <id>Q5JR59</id>
        <label>MTUS2</label>
    </interactant>
    <organismsDiffer>false</organismsDiffer>
    <experiments>3</experiments>
</comment>
<comment type="interaction">
    <interactant intactId="EBI-10217913">
        <id>Q14D33</id>
    </interactant>
    <interactant intactId="EBI-11522433">
        <id>Q5JR59-3</id>
        <label>MTUS2</label>
    </interactant>
    <organismsDiffer>false</organismsDiffer>
    <experiments>3</experiments>
</comment>
<comment type="interaction">
    <interactant intactId="EBI-10217913">
        <id>Q14D33</id>
    </interactant>
    <interactant intactId="EBI-10271199">
        <id>Q8NI38</id>
        <label>NFKBID</label>
    </interactant>
    <organismsDiffer>false</organismsDiffer>
    <experiments>3</experiments>
</comment>
<comment type="interaction">
    <interactant intactId="EBI-10217913">
        <id>Q14D33</id>
    </interactant>
    <interactant intactId="EBI-1105124">
        <id>Q5VU43</id>
        <label>PDE4DIP</label>
    </interactant>
    <organismsDiffer>false</organismsDiffer>
    <experiments>3</experiments>
</comment>
<comment type="interaction">
    <interactant intactId="EBI-10217913">
        <id>Q14D33</id>
    </interactant>
    <interactant intactId="EBI-302345">
        <id>Q8ND90</id>
        <label>PNMA1</label>
    </interactant>
    <organismsDiffer>false</organismsDiffer>
    <experiments>6</experiments>
</comment>
<comment type="interaction">
    <interactant intactId="EBI-10217913">
        <id>Q14D33</id>
    </interactant>
    <interactant intactId="EBI-302355">
        <id>Q9UL42</id>
        <label>PNMA2</label>
    </interactant>
    <organismsDiffer>false</organismsDiffer>
    <experiments>3</experiments>
</comment>
<comment type="interaction">
    <interactant intactId="EBI-10217913">
        <id>Q14D33</id>
    </interactant>
    <interactant intactId="EBI-348380">
        <id>P25788</id>
        <label>PSMA3</label>
    </interactant>
    <organismsDiffer>false</organismsDiffer>
    <experiments>3</experiments>
</comment>
<comment type="interaction">
    <interactant intactId="EBI-10217913">
        <id>Q14D33</id>
    </interactant>
    <interactant intactId="EBI-357793">
        <id>P60900</id>
        <label>PSMA6</label>
    </interactant>
    <organismsDiffer>false</organismsDiffer>
    <experiments>3</experiments>
</comment>
<comment type="interaction">
    <interactant intactId="EBI-10217913">
        <id>Q14D33</id>
    </interactant>
    <interactant intactId="EBI-1050964">
        <id>O43586</id>
        <label>PSTPIP1</label>
    </interactant>
    <organismsDiffer>false</organismsDiffer>
    <experiments>6</experiments>
</comment>
<comment type="interaction">
    <interactant intactId="EBI-10217913">
        <id>Q14D33</id>
    </interactant>
    <interactant intactId="EBI-740322">
        <id>Q93062</id>
        <label>RBPMS</label>
    </interactant>
    <organismsDiffer>false</organismsDiffer>
    <experiments>3</experiments>
</comment>
<comment type="interaction">
    <interactant intactId="EBI-10217913">
        <id>Q14D33</id>
    </interactant>
    <interactant intactId="EBI-726876">
        <id>Q6NUQ1</id>
        <label>RINT1</label>
    </interactant>
    <organismsDiffer>false</organismsDiffer>
    <experiments>3</experiments>
</comment>
<comment type="interaction">
    <interactant intactId="EBI-10217913">
        <id>Q14D33</id>
    </interactant>
    <interactant intactId="EBI-1378139">
        <id>Q9HAT0</id>
        <label>ROPN1</label>
    </interactant>
    <organismsDiffer>false</organismsDiffer>
    <experiments>6</experiments>
</comment>
<comment type="interaction">
    <interactant intactId="EBI-10217913">
        <id>Q14D33</id>
    </interactant>
    <interactant intactId="EBI-748621">
        <id>Q9UJW9</id>
        <label>SERTAD3</label>
    </interactant>
    <organismsDiffer>false</organismsDiffer>
    <experiments>3</experiments>
</comment>
<comment type="interaction">
    <interactant intactId="EBI-10217913">
        <id>Q14D33</id>
    </interactant>
    <interactant intactId="EBI-751145">
        <id>P23497</id>
        <label>SP100</label>
    </interactant>
    <organismsDiffer>false</organismsDiffer>
    <experiments>3</experiments>
</comment>
<comment type="interaction">
    <interactant intactId="EBI-10217913">
        <id>Q14D33</id>
    </interactant>
    <interactant intactId="EBI-6589365">
        <id>P23497-2</id>
        <label>SP100</label>
    </interactant>
    <organismsDiffer>false</organismsDiffer>
    <experiments>3</experiments>
</comment>
<comment type="interaction">
    <interactant intactId="EBI-10217913">
        <id>Q14D33</id>
    </interactant>
    <interactant intactId="EBI-715381">
        <id>Q96EA4</id>
        <label>SPDL1</label>
    </interactant>
    <organismsDiffer>false</organismsDiffer>
    <experiments>3</experiments>
</comment>
<comment type="interaction">
    <interactant intactId="EBI-10217913">
        <id>Q14D33</id>
    </interactant>
    <interactant intactId="EBI-359224">
        <id>Q13077</id>
        <label>TRAF1</label>
    </interactant>
    <organismsDiffer>false</organismsDiffer>
    <experiments>3</experiments>
</comment>
<comment type="interaction">
    <interactant intactId="EBI-10217913">
        <id>Q14D33</id>
    </interactant>
    <interactant intactId="EBI-740098">
        <id>P36406</id>
        <label>TRIM23</label>
    </interactant>
    <organismsDiffer>false</organismsDiffer>
    <experiments>3</experiments>
</comment>
<comment type="interaction">
    <interactant intactId="EBI-10217913">
        <id>Q14D33</id>
    </interactant>
    <interactant intactId="EBI-744794">
        <id>Q9BZW7</id>
        <label>TSGA10</label>
    </interactant>
    <organismsDiffer>false</organismsDiffer>
    <experiments>3</experiments>
</comment>
<comment type="interaction">
    <interactant intactId="EBI-10217913">
        <id>Q14D33</id>
    </interactant>
    <interactant intactId="EBI-739895">
        <id>Q8N6Y0</id>
        <label>USHBP1</label>
    </interactant>
    <organismsDiffer>false</organismsDiffer>
    <experiments>3</experiments>
</comment>
<comment type="subcellular location">
    <subcellularLocation>
        <location evidence="6">Membrane</location>
        <topology evidence="6">Single-pass membrane protein</topology>
    </subcellularLocation>
</comment>
<feature type="chain" id="PRO_0000348428" description="Receptor-transporting protein 5">
    <location>
        <begin position="1"/>
        <end position="572"/>
    </location>
</feature>
<feature type="transmembrane region" description="Helical" evidence="1">
    <location>
        <begin position="544"/>
        <end position="560"/>
    </location>
</feature>
<feature type="zinc finger region" description="3CxxC-type" evidence="1">
    <location>
        <begin position="52"/>
        <end position="148"/>
    </location>
</feature>
<feature type="sequence variant" id="VAR_060791" description="In dbSNP:rs7420371." evidence="2 3 5">
    <original>G</original>
    <variation>E</variation>
    <location>
        <position position="101"/>
    </location>
</feature>
<feature type="sequence variant" id="VAR_069402" evidence="4">
    <original>G</original>
    <variation>D</variation>
    <location>
        <position position="412"/>
    </location>
</feature>
<feature type="sequence conflict" description="In Ref. 1; BAC03544." evidence="6" ref="1">
    <original>I</original>
    <variation>T</variation>
    <location>
        <position position="241"/>
    </location>
</feature>
<gene>
    <name type="primary">RTP5</name>
    <name type="synonym">C2orf85</name>
    <name type="synonym">CXXC11</name>
    <name type="synonym">Z3CXXC5</name>
</gene>
<protein>
    <recommendedName>
        <fullName>Receptor-transporting protein 5</fullName>
    </recommendedName>
    <alternativeName>
        <fullName>3CxxC-type zinc finger protein 5</fullName>
    </alternativeName>
    <alternativeName>
        <fullName>CXXC-type zinc finger protein 11</fullName>
    </alternativeName>
</protein>
<keyword id="KW-0472">Membrane</keyword>
<keyword id="KW-0479">Metal-binding</keyword>
<keyword id="KW-1185">Reference proteome</keyword>
<keyword id="KW-0812">Transmembrane</keyword>
<keyword id="KW-1133">Transmembrane helix</keyword>
<keyword id="KW-0862">Zinc</keyword>
<keyword id="KW-0863">Zinc-finger</keyword>